<name>UL20_VZVD</name>
<feature type="chain" id="PRO_0000115969" description="Protein UL20 homolog">
    <location>
        <begin position="1"/>
        <end position="240"/>
    </location>
</feature>
<feature type="transmembrane region" description="Helical" evidence="3">
    <location>
        <begin position="76"/>
        <end position="96"/>
    </location>
</feature>
<feature type="transmembrane region" description="Helical" evidence="3">
    <location>
        <begin position="104"/>
        <end position="124"/>
    </location>
</feature>
<feature type="transmembrane region" description="Helical" evidence="3">
    <location>
        <begin position="147"/>
        <end position="167"/>
    </location>
</feature>
<feature type="transmembrane region" description="Helical" evidence="3">
    <location>
        <begin position="203"/>
        <end position="225"/>
    </location>
</feature>
<sequence length="240" mass="27079">MNPPQARVSEQTKDLLSVMVNQHPEEDAKVCKSSDNSPLYNTMVMLSYGGDTDLLLSSACTRTSTVNRSAFTQHSVFYIISTVLIQPICCIFFFFYYKATRCMLLFTAGLLLTILHHFRLIIMLLCVYRNIRSDLLPLSTSQQLLLGIIVVTRTMLFCITAYYTLFIDTRVFFLITGHLQSEVIFPDSVSKILPVSWGPSPAVLLVMAAVIYAMDCLVDTVSFIGPRVWVRVMLKTSISF</sequence>
<dbReference type="EMBL" id="X04370">
    <property type="protein sequence ID" value="CAA27922.1"/>
    <property type="molecule type" value="Genomic_DNA"/>
</dbReference>
<dbReference type="PIR" id="D27341">
    <property type="entry name" value="WZBE39"/>
</dbReference>
<dbReference type="Proteomes" id="UP000002602">
    <property type="component" value="Genome"/>
</dbReference>
<dbReference type="GO" id="GO:0044175">
    <property type="term" value="C:host cell endosome membrane"/>
    <property type="evidence" value="ECO:0007669"/>
    <property type="project" value="UniProtKB-SubCell"/>
</dbReference>
<dbReference type="GO" id="GO:0044178">
    <property type="term" value="C:host cell Golgi membrane"/>
    <property type="evidence" value="ECO:0007669"/>
    <property type="project" value="UniProtKB-SubCell"/>
</dbReference>
<dbReference type="GO" id="GO:0044200">
    <property type="term" value="C:host cell nuclear membrane"/>
    <property type="evidence" value="ECO:0007669"/>
    <property type="project" value="UniProtKB-SubCell"/>
</dbReference>
<dbReference type="GO" id="GO:0020002">
    <property type="term" value="C:host cell plasma membrane"/>
    <property type="evidence" value="ECO:0007669"/>
    <property type="project" value="UniProtKB-SubCell"/>
</dbReference>
<dbReference type="GO" id="GO:0016020">
    <property type="term" value="C:membrane"/>
    <property type="evidence" value="ECO:0007669"/>
    <property type="project" value="UniProtKB-KW"/>
</dbReference>
<dbReference type="GO" id="GO:0044423">
    <property type="term" value="C:virion component"/>
    <property type="evidence" value="ECO:0007669"/>
    <property type="project" value="UniProtKB-KW"/>
</dbReference>
<dbReference type="GO" id="GO:0019058">
    <property type="term" value="P:viral life cycle"/>
    <property type="evidence" value="ECO:0007669"/>
    <property type="project" value="InterPro"/>
</dbReference>
<dbReference type="InterPro" id="IPR007629">
    <property type="entry name" value="Herpes_UL20"/>
</dbReference>
<dbReference type="Pfam" id="PF04544">
    <property type="entry name" value="Herpes_UL20"/>
    <property type="match status" value="1"/>
</dbReference>
<proteinExistence type="evidence at protein level"/>
<gene>
    <name type="primary">39</name>
</gene>
<evidence type="ECO:0000250" key="1"/>
<evidence type="ECO:0000250" key="2">
    <source>
        <dbReference type="UniProtKB" id="P10204"/>
    </source>
</evidence>
<evidence type="ECO:0000255" key="3"/>
<evidence type="ECO:0000269" key="4">
    <source>
    </source>
</evidence>
<evidence type="ECO:0000269" key="5">
    <source>
    </source>
</evidence>
<evidence type="ECO:0000305" key="6"/>
<accession>P09290</accession>
<organismHost>
    <name type="scientific">Homo sapiens</name>
    <name type="common">Human</name>
    <dbReference type="NCBI Taxonomy" id="9606"/>
</organismHost>
<keyword id="KW-1032">Host cell membrane</keyword>
<keyword id="KW-1039">Host endosome</keyword>
<keyword id="KW-1040">Host Golgi apparatus</keyword>
<keyword id="KW-1043">Host membrane</keyword>
<keyword id="KW-1048">Host nucleus</keyword>
<keyword id="KW-0472">Membrane</keyword>
<keyword id="KW-1185">Reference proteome</keyword>
<keyword id="KW-0812">Transmembrane</keyword>
<keyword id="KW-1133">Transmembrane helix</keyword>
<keyword id="KW-0946">Virion</keyword>
<protein>
    <recommendedName>
        <fullName>Protein UL20 homolog</fullName>
    </recommendedName>
    <alternativeName>
        <fullName>Gene 39 membrane protein</fullName>
    </alternativeName>
</protein>
<reference key="1">
    <citation type="journal article" date="1986" name="J. Gen. Virol.">
        <title>The complete DNA sequence of varicella-zoster virus.</title>
        <authorList>
            <person name="Davison A.J."/>
            <person name="Scott J.E."/>
        </authorList>
    </citation>
    <scope>NUCLEOTIDE SEQUENCE [LARGE SCALE GENOMIC DNA]</scope>
</reference>
<reference key="2">
    <citation type="journal article" date="2007" name="Virology">
        <title>Intracellular localization of varicella-zoster virus ORF39 protein and its functional relationship to glycoprotein K.</title>
        <authorList>
            <person name="Govero J.L."/>
            <person name="Hall S.L."/>
            <person name="Heineman T.C."/>
        </authorList>
    </citation>
    <scope>SUBCELLULAR LOCATION</scope>
</reference>
<reference key="3">
    <citation type="journal article" date="2023" name="J. Microbiol.">
        <title>Varicella-Zoster Virus ORF39 Transmembrane Protein Suppresses Interferon-Beta Promoter Activation by Interacting with STING.</title>
        <authorList>
            <person name="Lee G.M."/>
            <person name="Gong S."/>
            <person name="Seo S.W."/>
            <person name="Ko H."/>
            <person name="Chung W.C."/>
            <person name="Lee J."/>
            <person name="Shin O.S."/>
            <person name="Ahn J.H."/>
        </authorList>
    </citation>
    <scope>FUNCTION</scope>
    <scope>INTERACTION WITH HOST STING1</scope>
    <scope>SUBCELLULAR LOCATION</scope>
</reference>
<organism>
    <name type="scientific">Varicella-zoster virus (strain Dumas)</name>
    <name type="common">HHV-3</name>
    <name type="synonym">Human herpesvirus 3</name>
    <dbReference type="NCBI Taxonomy" id="10338"/>
    <lineage>
        <taxon>Viruses</taxon>
        <taxon>Duplodnaviria</taxon>
        <taxon>Heunggongvirae</taxon>
        <taxon>Peploviricota</taxon>
        <taxon>Herviviricetes</taxon>
        <taxon>Herpesvirales</taxon>
        <taxon>Orthoherpesviridae</taxon>
        <taxon>Alphaherpesvirinae</taxon>
        <taxon>Varicellovirus</taxon>
        <taxon>Varicellovirus humanalpha3</taxon>
        <taxon>Human herpesvirus 3</taxon>
    </lineage>
</organism>
<comment type="function">
    <text evidence="2 5">Plays an essential role in egress of virus particles from the nucleus, cytoplasmic envelopment and virus-induced cell fusion. Forms a functional protein complex with gK and this interaction is absolutely essential for their coordinate intracellular transport, gK glycosylation, expression on host cell surface, and function. Together, they modulate gB-mediated virus-induced cell fusion and virion egress and therefore actively participate in these processes (By similarity). In addition, plays a role in inhibiting the type I interferon responses by suppressing STING1-mediated activation of the IFN-beta promoter (PubMed:36808561).</text>
</comment>
<comment type="subunit">
    <text evidence="2 5">Interacts with gK (via N-terminus); this interaction plays a role in the coordinate transport of UL20 and gK to the trans-Golgi network (TGN), and is required for their cell surface expression. Interacts with gB (By similarity). Interacts with host STING1; this interaction inhibits host interferon-beta promoter activation (PubMed:36808561).</text>
</comment>
<comment type="subcellular location">
    <subcellularLocation>
        <location evidence="2">Virion</location>
    </subcellularLocation>
    <subcellularLocation>
        <location evidence="4">Host cell membrane</location>
        <topology evidence="1">Multi-pass membrane protein</topology>
    </subcellularLocation>
    <subcellularLocation>
        <location evidence="1">Host endosome membrane</location>
        <topology evidence="1">Multi-pass membrane protein</topology>
    </subcellularLocation>
    <subcellularLocation>
        <location evidence="4 5">Host Golgi apparatus membrane</location>
        <topology evidence="1">Multi-pass membrane protein</topology>
    </subcellularLocation>
    <subcellularLocation>
        <location evidence="2">Host nucleus membrane</location>
        <topology evidence="1">Multi-pass membrane protein</topology>
    </subcellularLocation>
    <text evidence="2 4">During virion morphogenesis, this protein probably accumulates in the endosomes and trans-Golgi where secondary envelopment occurs. It is probably transported with gK to the cell surface from where it is endocytosed and directed to the trans-Golgi network (TGN) (By similarity).</text>
</comment>
<comment type="similarity">
    <text evidence="6">Belongs to the alphaherpesvirinae UL20 family.</text>
</comment>